<feature type="chain" id="PRO_0000402631" description="Pyrimidine monooxygenase RutA">
    <location>
        <begin position="1"/>
        <end position="372"/>
    </location>
</feature>
<feature type="binding site" evidence="1">
    <location>
        <begin position="57"/>
        <end position="58"/>
    </location>
    <ligand>
        <name>FMN</name>
        <dbReference type="ChEBI" id="CHEBI:58210"/>
    </ligand>
</feature>
<feature type="binding site" evidence="1">
    <location>
        <position position="123"/>
    </location>
    <ligand>
        <name>FMN</name>
        <dbReference type="ChEBI" id="CHEBI:58210"/>
    </ligand>
</feature>
<feature type="binding site" evidence="1">
    <location>
        <position position="132"/>
    </location>
    <ligand>
        <name>FMN</name>
        <dbReference type="ChEBI" id="CHEBI:58210"/>
    </ligand>
</feature>
<feature type="binding site" evidence="1">
    <location>
        <begin position="148"/>
        <end position="149"/>
    </location>
    <ligand>
        <name>FMN</name>
        <dbReference type="ChEBI" id="CHEBI:58210"/>
    </ligand>
</feature>
<feature type="binding site" evidence="1">
    <location>
        <position position="198"/>
    </location>
    <ligand>
        <name>FMN</name>
        <dbReference type="ChEBI" id="CHEBI:58210"/>
    </ligand>
</feature>
<accession>A9W3I1</accession>
<proteinExistence type="inferred from homology"/>
<comment type="function">
    <text evidence="1">Catalyzes the pyrimidine ring opening between N-3 and C-4 by an unusual flavin hydroperoxide-catalyzed mechanism, adding oxygen atoms in the process to yield ureidoacrylate peracid, that immediately reacts with FMN forming ureidoacrylate and FMN-N(5)-oxide. The FMN-N(5)-oxide reacts spontaneously with NADH to produce FMN. Requires the flavin reductase RutF to regenerate FMN in vivo.</text>
</comment>
<comment type="catalytic activity">
    <reaction evidence="1">
        <text>uracil + FMNH2 + NADH + O2 = (Z)-3-ureidoacrylate + FMN + NAD(+) + H2O + H(+)</text>
        <dbReference type="Rhea" id="RHEA:31587"/>
        <dbReference type="ChEBI" id="CHEBI:15377"/>
        <dbReference type="ChEBI" id="CHEBI:15378"/>
        <dbReference type="ChEBI" id="CHEBI:15379"/>
        <dbReference type="ChEBI" id="CHEBI:17568"/>
        <dbReference type="ChEBI" id="CHEBI:57540"/>
        <dbReference type="ChEBI" id="CHEBI:57618"/>
        <dbReference type="ChEBI" id="CHEBI:57945"/>
        <dbReference type="ChEBI" id="CHEBI:58210"/>
        <dbReference type="ChEBI" id="CHEBI:59891"/>
        <dbReference type="EC" id="1.14.99.46"/>
    </reaction>
</comment>
<comment type="catalytic activity">
    <reaction evidence="1">
        <text>thymine + FMNH2 + NADH + O2 = (Z)-2-methylureidoacrylate + FMN + NAD(+) + H2O + H(+)</text>
        <dbReference type="Rhea" id="RHEA:31599"/>
        <dbReference type="ChEBI" id="CHEBI:15377"/>
        <dbReference type="ChEBI" id="CHEBI:15378"/>
        <dbReference type="ChEBI" id="CHEBI:15379"/>
        <dbReference type="ChEBI" id="CHEBI:17821"/>
        <dbReference type="ChEBI" id="CHEBI:57540"/>
        <dbReference type="ChEBI" id="CHEBI:57618"/>
        <dbReference type="ChEBI" id="CHEBI:57945"/>
        <dbReference type="ChEBI" id="CHEBI:58210"/>
        <dbReference type="ChEBI" id="CHEBI:143783"/>
        <dbReference type="EC" id="1.14.99.46"/>
    </reaction>
</comment>
<comment type="similarity">
    <text evidence="1">Belongs to the NtaA/SnaA/DszA monooxygenase family. RutA subfamily.</text>
</comment>
<gene>
    <name evidence="1" type="primary">rutA</name>
    <name type="ordered locus">Mext_1738</name>
</gene>
<evidence type="ECO:0000255" key="1">
    <source>
        <dbReference type="HAMAP-Rule" id="MF_01699"/>
    </source>
</evidence>
<organism>
    <name type="scientific">Methylorubrum extorquens (strain PA1)</name>
    <name type="common">Methylobacterium extorquens</name>
    <dbReference type="NCBI Taxonomy" id="419610"/>
    <lineage>
        <taxon>Bacteria</taxon>
        <taxon>Pseudomonadati</taxon>
        <taxon>Pseudomonadota</taxon>
        <taxon>Alphaproteobacteria</taxon>
        <taxon>Hyphomicrobiales</taxon>
        <taxon>Methylobacteriaceae</taxon>
        <taxon>Methylorubrum</taxon>
    </lineage>
</organism>
<name>RUTA_METEP</name>
<protein>
    <recommendedName>
        <fullName evidence="1">Pyrimidine monooxygenase RutA</fullName>
        <ecNumber evidence="1">1.14.99.46</ecNumber>
    </recommendedName>
</protein>
<dbReference type="EC" id="1.14.99.46" evidence="1"/>
<dbReference type="EMBL" id="CP000908">
    <property type="protein sequence ID" value="ABY30137.1"/>
    <property type="molecule type" value="Genomic_DNA"/>
</dbReference>
<dbReference type="SMR" id="A9W3I1"/>
<dbReference type="KEGG" id="mex:Mext_1738"/>
<dbReference type="eggNOG" id="COG2141">
    <property type="taxonomic scope" value="Bacteria"/>
</dbReference>
<dbReference type="HOGENOM" id="CLU_027853_1_1_5"/>
<dbReference type="GO" id="GO:0008726">
    <property type="term" value="F:alkanesulfonate monooxygenase activity"/>
    <property type="evidence" value="ECO:0007669"/>
    <property type="project" value="TreeGrafter"/>
</dbReference>
<dbReference type="GO" id="GO:0052614">
    <property type="term" value="F:uracil oxygenase activity"/>
    <property type="evidence" value="ECO:0007669"/>
    <property type="project" value="UniProtKB-EC"/>
</dbReference>
<dbReference type="GO" id="GO:0046306">
    <property type="term" value="P:alkanesulfonate catabolic process"/>
    <property type="evidence" value="ECO:0007669"/>
    <property type="project" value="TreeGrafter"/>
</dbReference>
<dbReference type="GO" id="GO:0019740">
    <property type="term" value="P:nitrogen utilization"/>
    <property type="evidence" value="ECO:0007669"/>
    <property type="project" value="UniProtKB-UniRule"/>
</dbReference>
<dbReference type="GO" id="GO:0006212">
    <property type="term" value="P:uracil catabolic process"/>
    <property type="evidence" value="ECO:0007669"/>
    <property type="project" value="UniProtKB-UniRule"/>
</dbReference>
<dbReference type="CDD" id="cd01094">
    <property type="entry name" value="Alkanesulfonate_monoxygenase"/>
    <property type="match status" value="1"/>
</dbReference>
<dbReference type="FunFam" id="3.20.20.30:FF:000003">
    <property type="entry name" value="Pyrimidine monooxygenase RutA"/>
    <property type="match status" value="1"/>
</dbReference>
<dbReference type="Gene3D" id="3.20.20.30">
    <property type="entry name" value="Luciferase-like domain"/>
    <property type="match status" value="1"/>
</dbReference>
<dbReference type="HAMAP" id="MF_01699">
    <property type="entry name" value="RutA"/>
    <property type="match status" value="1"/>
</dbReference>
<dbReference type="InterPro" id="IPR011251">
    <property type="entry name" value="Luciferase-like_dom"/>
</dbReference>
<dbReference type="InterPro" id="IPR036661">
    <property type="entry name" value="Luciferase-like_sf"/>
</dbReference>
<dbReference type="InterPro" id="IPR019914">
    <property type="entry name" value="Pyrimidine_monooxygenase_RutA"/>
</dbReference>
<dbReference type="InterPro" id="IPR050172">
    <property type="entry name" value="SsuD_RutA_monooxygenase"/>
</dbReference>
<dbReference type="NCBIfam" id="TIGR03612">
    <property type="entry name" value="RutA"/>
    <property type="match status" value="1"/>
</dbReference>
<dbReference type="PANTHER" id="PTHR42847">
    <property type="entry name" value="ALKANESULFONATE MONOOXYGENASE"/>
    <property type="match status" value="1"/>
</dbReference>
<dbReference type="PANTHER" id="PTHR42847:SF4">
    <property type="entry name" value="ALKANESULFONATE MONOOXYGENASE-RELATED"/>
    <property type="match status" value="1"/>
</dbReference>
<dbReference type="Pfam" id="PF00296">
    <property type="entry name" value="Bac_luciferase"/>
    <property type="match status" value="1"/>
</dbReference>
<dbReference type="SUPFAM" id="SSF51679">
    <property type="entry name" value="Bacterial luciferase-like"/>
    <property type="match status" value="1"/>
</dbReference>
<reference key="1">
    <citation type="submission" date="2007-12" db="EMBL/GenBank/DDBJ databases">
        <title>Complete sequence of Methylobacterium extorquens PA1.</title>
        <authorList>
            <consortium name="US DOE Joint Genome Institute"/>
            <person name="Copeland A."/>
            <person name="Lucas S."/>
            <person name="Lapidus A."/>
            <person name="Barry K."/>
            <person name="Glavina del Rio T."/>
            <person name="Dalin E."/>
            <person name="Tice H."/>
            <person name="Pitluck S."/>
            <person name="Saunders E."/>
            <person name="Brettin T."/>
            <person name="Bruce D."/>
            <person name="Detter J.C."/>
            <person name="Han C."/>
            <person name="Schmutz J."/>
            <person name="Larimer F."/>
            <person name="Land M."/>
            <person name="Hauser L."/>
            <person name="Kyrpides N."/>
            <person name="Kim E."/>
            <person name="Marx C."/>
            <person name="Richardson P."/>
        </authorList>
    </citation>
    <scope>NUCLEOTIDE SEQUENCE [LARGE SCALE GENOMIC DNA]</scope>
    <source>
        <strain>PA1</strain>
    </source>
</reference>
<sequence>MTQAKDHAMNIGVFIPIGNNGWLLSENAPQYMPSFDLNKQITLKAEQHGLDFVLSMIKLRGFGGKTEFWDHNLESFTLMAGLAAVTSRIKLYATAPTLCLPPAIVARMASTIDSISNGRFGLNLVTGWQRPEYAQMGLWPGDEYFGRRYEYLSEYAQVLRELWETGRSDLKGEFFQMEDCRLSPRPQAEMKIICAGQSAAGMAFTATYADYNFCFGKGVNTPTAFAPTVERLEEAKAKTGRDVSSYVLFMVISDETDEAARAKWEHYKAGADAEAIAWLGLQGAADTKSGADTNIRQMADPTSAVNINMGTLVGSHATVAALLDEVVTVPGTGGVLLVFDDFLKGLDDFGTKIQPLMRSRRHVTGEALAEVA</sequence>
<keyword id="KW-0285">Flavoprotein</keyword>
<keyword id="KW-0288">FMN</keyword>
<keyword id="KW-0503">Monooxygenase</keyword>
<keyword id="KW-0521">NADP</keyword>
<keyword id="KW-0560">Oxidoreductase</keyword>